<proteinExistence type="evidence at protein level"/>
<sequence length="292" mass="31889">MTTTEEALTFESTSKFAQVRPHLKLHYHEAGVGNDTTIVLLHGGGPGASSWSNFARNIPVLAEKFHVLAVDQPGYGLSDKPTEHPQYFVHSASALKDLLDTLGVGGRVHLLGNSLGGGAAVRFALDYPDRAGRLVLMGPGGLSVNLFAPDPTEGVKNLGKFGYQPTRENLEAFLRIMVFDQKLITDELIDERFAAASTPESLAAAKAMGKSFSSADFELGMLWRDAYKLRQRVLLIWGREDRVNPLDGALVALKMIPRAQLHVFGGCGHWAQLEKFDEFNRLATDFLLDGGK</sequence>
<dbReference type="EC" id="3.7.1.17"/>
<dbReference type="EMBL" id="CP000431">
    <property type="protein sequence ID" value="ABG96326.1"/>
    <property type="molecule type" value="Genomic_DNA"/>
</dbReference>
<dbReference type="EMBL" id="AB030672">
    <property type="protein sequence ID" value="BAA98136.1"/>
    <property type="molecule type" value="Genomic_DNA"/>
</dbReference>
<dbReference type="RefSeq" id="WP_011596918.1">
    <property type="nucleotide sequence ID" value="NC_008268.1"/>
</dbReference>
<dbReference type="SMR" id="Q9KWQ6"/>
<dbReference type="ESTHER" id="rhosp-bphD2">
    <property type="family name" value="Carbon-carbon_bond_hydrolase"/>
</dbReference>
<dbReference type="MEROPS" id="S33.016"/>
<dbReference type="KEGG" id="rha:RHA1_ro04540"/>
<dbReference type="PATRIC" id="fig|101510.16.peg.4576"/>
<dbReference type="eggNOG" id="COG2267">
    <property type="taxonomic scope" value="Bacteria"/>
</dbReference>
<dbReference type="HOGENOM" id="CLU_020336_13_2_11"/>
<dbReference type="OrthoDB" id="9801162at2"/>
<dbReference type="BioCyc" id="MetaCyc:MONOMER-16965"/>
<dbReference type="BRENDA" id="3.7.1.8">
    <property type="organism ID" value="5397"/>
</dbReference>
<dbReference type="UniPathway" id="UPA00062"/>
<dbReference type="Proteomes" id="UP000008710">
    <property type="component" value="Chromosome"/>
</dbReference>
<dbReference type="GO" id="GO:0016020">
    <property type="term" value="C:membrane"/>
    <property type="evidence" value="ECO:0007669"/>
    <property type="project" value="TreeGrafter"/>
</dbReference>
<dbReference type="GO" id="GO:0102296">
    <property type="term" value="F:4,5-9,10-diseco-3-hydroxy-5,9,17-trioxoandrosta-1(10),2-diene-4-oate hydrolase activity"/>
    <property type="evidence" value="ECO:0007669"/>
    <property type="project" value="UniProtKB-EC"/>
</dbReference>
<dbReference type="GO" id="GO:0016042">
    <property type="term" value="P:lipid catabolic process"/>
    <property type="evidence" value="ECO:0007669"/>
    <property type="project" value="UniProtKB-KW"/>
</dbReference>
<dbReference type="GO" id="GO:0006694">
    <property type="term" value="P:steroid biosynthetic process"/>
    <property type="evidence" value="ECO:0007669"/>
    <property type="project" value="UniProtKB-UniPathway"/>
</dbReference>
<dbReference type="Gene3D" id="3.40.50.1820">
    <property type="entry name" value="alpha/beta hydrolase"/>
    <property type="match status" value="1"/>
</dbReference>
<dbReference type="InterPro" id="IPR000073">
    <property type="entry name" value="AB_hydrolase_1"/>
</dbReference>
<dbReference type="InterPro" id="IPR029058">
    <property type="entry name" value="AB_hydrolase_fold"/>
</dbReference>
<dbReference type="InterPro" id="IPR050266">
    <property type="entry name" value="AB_hydrolase_sf"/>
</dbReference>
<dbReference type="InterPro" id="IPR000639">
    <property type="entry name" value="Epox_hydrolase-like"/>
</dbReference>
<dbReference type="InterPro" id="IPR054676">
    <property type="entry name" value="HsaD"/>
</dbReference>
<dbReference type="NCBIfam" id="NF045632">
    <property type="entry name" value="hydroxlase_HsaD"/>
    <property type="match status" value="1"/>
</dbReference>
<dbReference type="PANTHER" id="PTHR43798:SF33">
    <property type="entry name" value="HYDROLASE, PUTATIVE (AFU_ORTHOLOGUE AFUA_2G14860)-RELATED"/>
    <property type="match status" value="1"/>
</dbReference>
<dbReference type="PANTHER" id="PTHR43798">
    <property type="entry name" value="MONOACYLGLYCEROL LIPASE"/>
    <property type="match status" value="1"/>
</dbReference>
<dbReference type="Pfam" id="PF00561">
    <property type="entry name" value="Abhydrolase_1"/>
    <property type="match status" value="1"/>
</dbReference>
<dbReference type="PRINTS" id="PR00111">
    <property type="entry name" value="ABHYDROLASE"/>
</dbReference>
<dbReference type="PRINTS" id="PR00412">
    <property type="entry name" value="EPOXHYDRLASE"/>
</dbReference>
<dbReference type="SUPFAM" id="SSF53474">
    <property type="entry name" value="alpha/beta-Hydrolases"/>
    <property type="match status" value="1"/>
</dbReference>
<accession>Q9KWQ6</accession>
<gene>
    <name type="primary">hsaD</name>
    <name type="synonym">bphD2</name>
    <name type="ordered locus">RHA1_ro04540</name>
</gene>
<reference key="1">
    <citation type="journal article" date="2002" name="J. Biosci. Bioeng.">
        <title>Diversity of 2,3-dihydroxybiphenyl dioxygenase genes in a strong PCB degrader, Rhodococcus sp. strain RHA1.</title>
        <authorList>
            <person name="Sakai M."/>
            <person name="Masai E."/>
            <person name="Asami H."/>
            <person name="Sugiyama K."/>
            <person name="Kimbara K."/>
            <person name="Fukuda M."/>
        </authorList>
    </citation>
    <scope>NUCLEOTIDE SEQUENCE [GENOMIC DNA]</scope>
    <scope>FUNCTION IN THE DEGRADATION OF BIPHENYL AND POLYCHLORINATED BIPHENYLS</scope>
    <source>
        <strain>RHA1</strain>
    </source>
</reference>
<reference key="2">
    <citation type="journal article" date="2006" name="Proc. Natl. Acad. Sci. U.S.A.">
        <title>The complete genome of Rhodococcus sp. RHA1 provides insights into a catabolic powerhouse.</title>
        <authorList>
            <person name="McLeod M.P."/>
            <person name="Warren R.L."/>
            <person name="Hsiao W.W.L."/>
            <person name="Araki N."/>
            <person name="Myhre M."/>
            <person name="Fernandes C."/>
            <person name="Miyazawa D."/>
            <person name="Wong W."/>
            <person name="Lillquist A.L."/>
            <person name="Wang D."/>
            <person name="Dosanjh M."/>
            <person name="Hara H."/>
            <person name="Petrescu A."/>
            <person name="Morin R.D."/>
            <person name="Yang G."/>
            <person name="Stott J.M."/>
            <person name="Schein J.E."/>
            <person name="Shin H."/>
            <person name="Smailus D."/>
            <person name="Siddiqui A.S."/>
            <person name="Marra M.A."/>
            <person name="Jones S.J.M."/>
            <person name="Holt R."/>
            <person name="Brinkman F.S.L."/>
            <person name="Miyauchi K."/>
            <person name="Fukuda M."/>
            <person name="Davies J.E."/>
            <person name="Mohn W.W."/>
            <person name="Eltis L.D."/>
        </authorList>
    </citation>
    <scope>NUCLEOTIDE SEQUENCE [LARGE SCALE GENOMIC DNA]</scope>
    <source>
        <strain>RHA1</strain>
    </source>
</reference>
<reference key="3">
    <citation type="journal article" date="2007" name="Proc. Natl. Acad. Sci. U.S.A.">
        <title>A gene cluster encoding cholesterol catabolism in a soil actinomycete provides insight into Mycobacterium tuberculosis survival in macrophages.</title>
        <authorList>
            <person name="Van der Geize R."/>
            <person name="Yam K."/>
            <person name="Heuser T."/>
            <person name="Wilbrink M.H."/>
            <person name="Hara H."/>
            <person name="Anderton M.C."/>
            <person name="Sim E."/>
            <person name="Dijkhuizen L."/>
            <person name="Davies J.E."/>
            <person name="Mohn W.W."/>
            <person name="Eltis L.D."/>
        </authorList>
    </citation>
    <scope>FUNCTION IN CHOLESTEROL DEGRADATION</scope>
    <source>
        <strain>RHA1</strain>
    </source>
</reference>
<comment type="function">
    <text evidence="2 3">Catalyzes the hydrolysis of a carbon-carbon bond in 4,5: 9,10-diseco-3-hydroxy-5,9,17-trioxoandrosta-1(10),2-diene-4-oate (4,9-DSHA) to yield 9,17-dioxo-1,2,3,4,10,19-hexanorandrostan-5-oate (DOHNAA) and 2-hydroxy-hexa-2,4-dienoate (HHD). Also involved in biphenyl and polychlorinated biphenyls (PCBs) degradation.</text>
</comment>
<comment type="catalytic activity">
    <reaction>
        <text>(1E,2Z)-3-hydroxy-5,9,17-trioxo-4,5:9,10-disecoandrosta-1(10),2-dien-4-oate + H2O = 3-[(3aS,4S,7aS)-7a-methyl-1,5-dioxo-octahydro-1H-inden-4-yl]propanoate + (2Z,4Z)-2-hydroxyhexa-2,4-dienoate + H(+)</text>
        <dbReference type="Rhea" id="RHEA:32035"/>
        <dbReference type="ChEBI" id="CHEBI:15377"/>
        <dbReference type="ChEBI" id="CHEBI:15378"/>
        <dbReference type="ChEBI" id="CHEBI:63690"/>
        <dbReference type="ChEBI" id="CHEBI:63692"/>
        <dbReference type="ChEBI" id="CHEBI:63693"/>
        <dbReference type="EC" id="3.7.1.17"/>
    </reaction>
</comment>
<comment type="pathway">
    <text>Lipid metabolism; steroid biosynthesis.</text>
</comment>
<comment type="subunit">
    <text evidence="1">Homodimer.</text>
</comment>
<comment type="similarity">
    <text evidence="4">Belongs to the AB hydrolase superfamily. HsaD family.</text>
</comment>
<keyword id="KW-0058">Aromatic hydrocarbons catabolism</keyword>
<keyword id="KW-0378">Hydrolase</keyword>
<keyword id="KW-0442">Lipid degradation</keyword>
<keyword id="KW-0443">Lipid metabolism</keyword>
<feature type="chain" id="PRO_0000404510" description="4,5:9,10-diseco-3-hydroxy-5,9,17-trioxoandrosta-1(10),2-diene-4-oate hydrolase">
    <location>
        <begin position="1"/>
        <end position="292"/>
    </location>
</feature>
<feature type="active site" description="Proton acceptor" evidence="1">
    <location>
        <position position="269"/>
    </location>
</feature>
<feature type="binding site" evidence="1">
    <location>
        <begin position="44"/>
        <end position="45"/>
    </location>
    <ligand>
        <name>substrate</name>
    </ligand>
</feature>
<feature type="binding site" evidence="1">
    <location>
        <position position="53"/>
    </location>
    <ligand>
        <name>substrate</name>
    </ligand>
</feature>
<feature type="binding site" evidence="1">
    <location>
        <position position="113"/>
    </location>
    <ligand>
        <name>substrate</name>
    </ligand>
</feature>
<feature type="binding site" evidence="1">
    <location>
        <position position="192"/>
    </location>
    <ligand>
        <name>substrate</name>
    </ligand>
</feature>
<feature type="binding site" evidence="1">
    <location>
        <position position="270"/>
    </location>
    <ligand>
        <name>substrate</name>
    </ligand>
</feature>
<feature type="site" description="Transition state stabilizer" evidence="1">
    <location>
        <position position="114"/>
    </location>
</feature>
<organism>
    <name type="scientific">Rhodococcus jostii (strain RHA1)</name>
    <dbReference type="NCBI Taxonomy" id="101510"/>
    <lineage>
        <taxon>Bacteria</taxon>
        <taxon>Bacillati</taxon>
        <taxon>Actinomycetota</taxon>
        <taxon>Actinomycetes</taxon>
        <taxon>Mycobacteriales</taxon>
        <taxon>Nocardiaceae</taxon>
        <taxon>Rhodococcus</taxon>
    </lineage>
</organism>
<evidence type="ECO:0000250" key="1"/>
<evidence type="ECO:0000269" key="2">
    <source>
    </source>
</evidence>
<evidence type="ECO:0000269" key="3">
    <source>
    </source>
</evidence>
<evidence type="ECO:0000305" key="4"/>
<protein>
    <recommendedName>
        <fullName>4,5:9,10-diseco-3-hydroxy-5,9,17-trioxoandrosta-1(10),2-diene-4-oate hydrolase</fullName>
        <ecNumber>3.7.1.17</ecNumber>
    </recommendedName>
    <alternativeName>
        <fullName>Meta-cleavage product hydrolase</fullName>
        <shortName>MCP hydrolase</shortName>
    </alternativeName>
</protein>
<name>HSAD_RHOJR</name>